<organism>
    <name type="scientific">Geobacillus kaustophilus (strain HTA426)</name>
    <dbReference type="NCBI Taxonomy" id="235909"/>
    <lineage>
        <taxon>Bacteria</taxon>
        <taxon>Bacillati</taxon>
        <taxon>Bacillota</taxon>
        <taxon>Bacilli</taxon>
        <taxon>Bacillales</taxon>
        <taxon>Anoxybacillaceae</taxon>
        <taxon>Geobacillus</taxon>
        <taxon>Geobacillus thermoleovorans group</taxon>
    </lineage>
</organism>
<reference key="1">
    <citation type="journal article" date="2004" name="Nucleic Acids Res.">
        <title>Thermoadaptation trait revealed by the genome sequence of thermophilic Geobacillus kaustophilus.</title>
        <authorList>
            <person name="Takami H."/>
            <person name="Takaki Y."/>
            <person name="Chee G.-J."/>
            <person name="Nishi S."/>
            <person name="Shimamura S."/>
            <person name="Suzuki H."/>
            <person name="Matsui S."/>
            <person name="Uchiyama I."/>
        </authorList>
    </citation>
    <scope>NUCLEOTIDE SEQUENCE [LARGE SCALE GENOMIC DNA]</scope>
    <source>
        <strain>HTA426</strain>
    </source>
</reference>
<evidence type="ECO:0000255" key="1">
    <source>
        <dbReference type="HAMAP-Rule" id="MF_01961"/>
    </source>
</evidence>
<keyword id="KW-0349">Heme</keyword>
<keyword id="KW-0376">Hydrogen peroxide</keyword>
<keyword id="KW-0408">Iron</keyword>
<keyword id="KW-0479">Metal-binding</keyword>
<keyword id="KW-0560">Oxidoreductase</keyword>
<keyword id="KW-0575">Peroxidase</keyword>
<keyword id="KW-1185">Reference proteome</keyword>
<dbReference type="EC" id="1.11.1.21" evidence="1"/>
<dbReference type="EMBL" id="BA000043">
    <property type="protein sequence ID" value="BAD75995.1"/>
    <property type="molecule type" value="Genomic_DNA"/>
</dbReference>
<dbReference type="RefSeq" id="WP_011231203.1">
    <property type="nucleotide sequence ID" value="NC_006510.1"/>
</dbReference>
<dbReference type="SMR" id="Q5KZ91"/>
<dbReference type="STRING" id="235909.GK1710"/>
<dbReference type="PeroxiBase" id="2370">
    <property type="entry name" value="GkaCP01_HTA426"/>
</dbReference>
<dbReference type="KEGG" id="gka:GK1710"/>
<dbReference type="PATRIC" id="fig|235909.7.peg.1835"/>
<dbReference type="eggNOG" id="COG0376">
    <property type="taxonomic scope" value="Bacteria"/>
</dbReference>
<dbReference type="HOGENOM" id="CLU_025424_2_0_9"/>
<dbReference type="Proteomes" id="UP000001172">
    <property type="component" value="Chromosome"/>
</dbReference>
<dbReference type="GO" id="GO:0005829">
    <property type="term" value="C:cytosol"/>
    <property type="evidence" value="ECO:0007669"/>
    <property type="project" value="TreeGrafter"/>
</dbReference>
<dbReference type="GO" id="GO:0004096">
    <property type="term" value="F:catalase activity"/>
    <property type="evidence" value="ECO:0007669"/>
    <property type="project" value="UniProtKB-UniRule"/>
</dbReference>
<dbReference type="GO" id="GO:0020037">
    <property type="term" value="F:heme binding"/>
    <property type="evidence" value="ECO:0007669"/>
    <property type="project" value="InterPro"/>
</dbReference>
<dbReference type="GO" id="GO:0046872">
    <property type="term" value="F:metal ion binding"/>
    <property type="evidence" value="ECO:0007669"/>
    <property type="project" value="UniProtKB-KW"/>
</dbReference>
<dbReference type="GO" id="GO:0070301">
    <property type="term" value="P:cellular response to hydrogen peroxide"/>
    <property type="evidence" value="ECO:0007669"/>
    <property type="project" value="TreeGrafter"/>
</dbReference>
<dbReference type="GO" id="GO:0042744">
    <property type="term" value="P:hydrogen peroxide catabolic process"/>
    <property type="evidence" value="ECO:0007669"/>
    <property type="project" value="UniProtKB-KW"/>
</dbReference>
<dbReference type="CDD" id="cd00649">
    <property type="entry name" value="catalase_peroxidase_1"/>
    <property type="match status" value="1"/>
</dbReference>
<dbReference type="CDD" id="cd08200">
    <property type="entry name" value="catalase_peroxidase_2"/>
    <property type="match status" value="1"/>
</dbReference>
<dbReference type="FunFam" id="1.10.420.10:FF:000002">
    <property type="entry name" value="Catalase-peroxidase"/>
    <property type="match status" value="1"/>
</dbReference>
<dbReference type="FunFam" id="1.10.420.10:FF:000004">
    <property type="entry name" value="Catalase-peroxidase"/>
    <property type="match status" value="1"/>
</dbReference>
<dbReference type="FunFam" id="1.10.520.10:FF:000002">
    <property type="entry name" value="Catalase-peroxidase"/>
    <property type="match status" value="1"/>
</dbReference>
<dbReference type="Gene3D" id="1.10.520.10">
    <property type="match status" value="2"/>
</dbReference>
<dbReference type="Gene3D" id="1.10.420.10">
    <property type="entry name" value="Peroxidase, domain 2"/>
    <property type="match status" value="2"/>
</dbReference>
<dbReference type="HAMAP" id="MF_01961">
    <property type="entry name" value="Catal_peroxid"/>
    <property type="match status" value="1"/>
</dbReference>
<dbReference type="InterPro" id="IPR000763">
    <property type="entry name" value="Catalase_peroxidase"/>
</dbReference>
<dbReference type="InterPro" id="IPR002016">
    <property type="entry name" value="Haem_peroxidase"/>
</dbReference>
<dbReference type="InterPro" id="IPR010255">
    <property type="entry name" value="Haem_peroxidase_sf"/>
</dbReference>
<dbReference type="InterPro" id="IPR019794">
    <property type="entry name" value="Peroxidases_AS"/>
</dbReference>
<dbReference type="InterPro" id="IPR019793">
    <property type="entry name" value="Peroxidases_heam-ligand_BS"/>
</dbReference>
<dbReference type="NCBIfam" id="TIGR00198">
    <property type="entry name" value="cat_per_HPI"/>
    <property type="match status" value="1"/>
</dbReference>
<dbReference type="NCBIfam" id="NF011635">
    <property type="entry name" value="PRK15061.1"/>
    <property type="match status" value="1"/>
</dbReference>
<dbReference type="PANTHER" id="PTHR30555:SF6">
    <property type="entry name" value="CATALASE-PEROXIDASE"/>
    <property type="match status" value="1"/>
</dbReference>
<dbReference type="PANTHER" id="PTHR30555">
    <property type="entry name" value="HYDROPEROXIDASE I, BIFUNCTIONAL CATALASE-PEROXIDASE"/>
    <property type="match status" value="1"/>
</dbReference>
<dbReference type="Pfam" id="PF00141">
    <property type="entry name" value="peroxidase"/>
    <property type="match status" value="2"/>
</dbReference>
<dbReference type="PRINTS" id="PR00460">
    <property type="entry name" value="BPEROXIDASE"/>
</dbReference>
<dbReference type="PRINTS" id="PR00458">
    <property type="entry name" value="PEROXIDASE"/>
</dbReference>
<dbReference type="SUPFAM" id="SSF48113">
    <property type="entry name" value="Heme-dependent peroxidases"/>
    <property type="match status" value="2"/>
</dbReference>
<dbReference type="PROSITE" id="PS00435">
    <property type="entry name" value="PEROXIDASE_1"/>
    <property type="match status" value="1"/>
</dbReference>
<dbReference type="PROSITE" id="PS00436">
    <property type="entry name" value="PEROXIDASE_2"/>
    <property type="match status" value="1"/>
</dbReference>
<dbReference type="PROSITE" id="PS50873">
    <property type="entry name" value="PEROXIDASE_4"/>
    <property type="match status" value="1"/>
</dbReference>
<protein>
    <recommendedName>
        <fullName evidence="1">Catalase-peroxidase</fullName>
        <shortName evidence="1">CP</shortName>
        <ecNumber evidence="1">1.11.1.21</ecNumber>
    </recommendedName>
    <alternativeName>
        <fullName evidence="1">Peroxidase/catalase</fullName>
    </alternativeName>
</protein>
<feature type="chain" id="PRO_0000354799" description="Catalase-peroxidase">
    <location>
        <begin position="1"/>
        <end position="736"/>
    </location>
</feature>
<feature type="active site" description="Proton acceptor" evidence="1">
    <location>
        <position position="101"/>
    </location>
</feature>
<feature type="binding site" description="axial binding residue" evidence="1">
    <location>
        <position position="264"/>
    </location>
    <ligand>
        <name>heme b</name>
        <dbReference type="ChEBI" id="CHEBI:60344"/>
    </ligand>
    <ligandPart>
        <name>Fe</name>
        <dbReference type="ChEBI" id="CHEBI:18248"/>
    </ligandPart>
</feature>
<feature type="site" description="Transition state stabilizer" evidence="1">
    <location>
        <position position="97"/>
    </location>
</feature>
<feature type="cross-link" description="Tryptophyl-tyrosyl-methioninium (Trp-Tyr) (with M-249)" evidence="1">
    <location>
        <begin position="100"/>
        <end position="223"/>
    </location>
</feature>
<feature type="cross-link" description="Tryptophyl-tyrosyl-methioninium (Tyr-Met) (with W-100)" evidence="1">
    <location>
        <begin position="223"/>
        <end position="249"/>
    </location>
</feature>
<accession>Q5KZ91</accession>
<proteinExistence type="inferred from homology"/>
<gene>
    <name evidence="1" type="primary">katG</name>
    <name type="ordered locus">GK1710</name>
</gene>
<comment type="function">
    <text evidence="1">Bifunctional enzyme with both catalase and broad-spectrum peroxidase activity.</text>
</comment>
<comment type="catalytic activity">
    <reaction evidence="1">
        <text>H2O2 + AH2 = A + 2 H2O</text>
        <dbReference type="Rhea" id="RHEA:30275"/>
        <dbReference type="ChEBI" id="CHEBI:13193"/>
        <dbReference type="ChEBI" id="CHEBI:15377"/>
        <dbReference type="ChEBI" id="CHEBI:16240"/>
        <dbReference type="ChEBI" id="CHEBI:17499"/>
        <dbReference type="EC" id="1.11.1.21"/>
    </reaction>
</comment>
<comment type="catalytic activity">
    <reaction evidence="1">
        <text>2 H2O2 = O2 + 2 H2O</text>
        <dbReference type="Rhea" id="RHEA:20309"/>
        <dbReference type="ChEBI" id="CHEBI:15377"/>
        <dbReference type="ChEBI" id="CHEBI:15379"/>
        <dbReference type="ChEBI" id="CHEBI:16240"/>
        <dbReference type="EC" id="1.11.1.21"/>
    </reaction>
</comment>
<comment type="cofactor">
    <cofactor evidence="1">
        <name>heme b</name>
        <dbReference type="ChEBI" id="CHEBI:60344"/>
    </cofactor>
    <text evidence="1">Binds 1 heme b (iron(II)-protoporphyrin IX) group per dimer.</text>
</comment>
<comment type="subunit">
    <text evidence="1">Homodimer or homotetramer.</text>
</comment>
<comment type="PTM">
    <text evidence="1">Formation of the three residue Trp-Tyr-Met cross-link is important for the catalase, but not the peroxidase activity of the enzyme.</text>
</comment>
<comment type="similarity">
    <text evidence="1">Belongs to the peroxidase family. Peroxidase/catalase subfamily.</text>
</comment>
<name>KATG_GEOKA</name>
<sequence length="736" mass="83226">MKNQNQHNTSKCPYHGSVTSYNSNRTTNKDWWPNQLNLSILHQHDRKTNPHDEEFNYAEEFQKLDYWALKEDLRKLMTESQDWWPADYGHYGPLFIRMAWHSAGTYRIGDGRGGGSTGTQRFAPLNSWPDNANLDKARRLLWPIKKKYGNKISWADLMILAGNVAIESMGGKTIGFGGGREDVWHPEEDIYWGAEKEWLASERYSGDRELENPLAAVQMGLIYVNPEGPDGKPDPVAAARDIRETFRRMGMNDEETVALIAGGHTFGKAHGAGPASHVGPEPEAAPIEAQGLGWISSYGKGKGRDTITSGIEGAWTPTPTQWDNSYFRLLFEYEWKLTKSPAGAYQWEAVNLREEDLAPDAEDPNVKVPPMMMTTDLALRFDPEYEKIARRFYENPEEFADAFARAWFKLTHRDMGPKTRYLGPEVPKEDFIWQDPIPTVDYELSDAEIEEIKAKILNSGLTVSELVKTAWASASTFRNSDKRGGANGARIRLAPQKDWEVNEPERLAKVLSVYEDIQRELPKKVSIADLIVLGGSAAVEKAARDAGFDVKVPFIPGRGDATQEQTDVESFSVLEPFADGFRNYQKKEYSVGPEELLIDKAQLLGLTAPEMTVLVGGLRVLGANYRDLPHGVFTDRIGVLTNDFFVNLVDMNYEWVPTEGGIYEIRDRQTGEVRWTATRVDLIFGANSILRSYAEFYAQDDNREKFVRDFINAWVKVMNADRFDIHLKQAKESVTV</sequence>